<accession>Q06805</accession>
<keyword id="KW-0037">Angiogenesis</keyword>
<keyword id="KW-0067">ATP-binding</keyword>
<keyword id="KW-1003">Cell membrane</keyword>
<keyword id="KW-1015">Disulfide bond</keyword>
<keyword id="KW-0245">EGF-like domain</keyword>
<keyword id="KW-0325">Glycoprotein</keyword>
<keyword id="KW-0393">Immunoglobulin domain</keyword>
<keyword id="KW-0418">Kinase</keyword>
<keyword id="KW-0472">Membrane</keyword>
<keyword id="KW-0547">Nucleotide-binding</keyword>
<keyword id="KW-0597">Phosphoprotein</keyword>
<keyword id="KW-0675">Receptor</keyword>
<keyword id="KW-1185">Reference proteome</keyword>
<keyword id="KW-0677">Repeat</keyword>
<keyword id="KW-0732">Signal</keyword>
<keyword id="KW-0808">Transferase</keyword>
<keyword id="KW-0812">Transmembrane</keyword>
<keyword id="KW-1133">Transmembrane helix</keyword>
<keyword id="KW-0829">Tyrosine-protein kinase</keyword>
<proteinExistence type="evidence at transcript level"/>
<dbReference type="EC" id="2.7.10.1"/>
<dbReference type="EMBL" id="X71423">
    <property type="protein sequence ID" value="CAA50554.1"/>
    <property type="molecule type" value="mRNA"/>
</dbReference>
<dbReference type="PIR" id="S57845">
    <property type="entry name" value="S57845"/>
</dbReference>
<dbReference type="RefSeq" id="NP_776390.1">
    <property type="nucleotide sequence ID" value="NM_173965.2"/>
</dbReference>
<dbReference type="SMR" id="Q06805"/>
<dbReference type="FunCoup" id="Q06805">
    <property type="interactions" value="457"/>
</dbReference>
<dbReference type="STRING" id="9913.ENSBTAP00000063613"/>
<dbReference type="GlyCosmos" id="Q06805">
    <property type="glycosylation" value="5 sites, No reported glycans"/>
</dbReference>
<dbReference type="GlyGen" id="Q06805">
    <property type="glycosylation" value="5 sites"/>
</dbReference>
<dbReference type="PaxDb" id="9913-ENSBTAP00000004917"/>
<dbReference type="GeneID" id="280941"/>
<dbReference type="KEGG" id="bta:280941"/>
<dbReference type="CTD" id="7075"/>
<dbReference type="eggNOG" id="KOG0200">
    <property type="taxonomic scope" value="Eukaryota"/>
</dbReference>
<dbReference type="InParanoid" id="Q06805"/>
<dbReference type="OrthoDB" id="1668230at2759"/>
<dbReference type="BRENDA" id="2.7.10.1">
    <property type="organism ID" value="908"/>
</dbReference>
<dbReference type="Proteomes" id="UP000009136">
    <property type="component" value="Unplaced"/>
</dbReference>
<dbReference type="GO" id="GO:0005886">
    <property type="term" value="C:plasma membrane"/>
    <property type="evidence" value="ECO:0000318"/>
    <property type="project" value="GO_Central"/>
</dbReference>
<dbReference type="GO" id="GO:0043235">
    <property type="term" value="C:receptor complex"/>
    <property type="evidence" value="ECO:0000318"/>
    <property type="project" value="GO_Central"/>
</dbReference>
<dbReference type="GO" id="GO:0005524">
    <property type="term" value="F:ATP binding"/>
    <property type="evidence" value="ECO:0007669"/>
    <property type="project" value="UniProtKB-KW"/>
</dbReference>
<dbReference type="GO" id="GO:0004714">
    <property type="term" value="F:transmembrane receptor protein tyrosine kinase activity"/>
    <property type="evidence" value="ECO:0000318"/>
    <property type="project" value="GO_Central"/>
</dbReference>
<dbReference type="GO" id="GO:0001525">
    <property type="term" value="P:angiogenesis"/>
    <property type="evidence" value="ECO:0007669"/>
    <property type="project" value="UniProtKB-KW"/>
</dbReference>
<dbReference type="GO" id="GO:0007169">
    <property type="term" value="P:cell surface receptor protein tyrosine kinase signaling pathway"/>
    <property type="evidence" value="ECO:0000318"/>
    <property type="project" value="GO_Central"/>
</dbReference>
<dbReference type="GO" id="GO:0045766">
    <property type="term" value="P:positive regulation of angiogenesis"/>
    <property type="evidence" value="ECO:0000318"/>
    <property type="project" value="GO_Central"/>
</dbReference>
<dbReference type="CDD" id="cd00054">
    <property type="entry name" value="EGF_CA"/>
    <property type="match status" value="2"/>
</dbReference>
<dbReference type="CDD" id="cd00063">
    <property type="entry name" value="FN3"/>
    <property type="match status" value="3"/>
</dbReference>
<dbReference type="CDD" id="cd20964">
    <property type="entry name" value="IgI_Tie2"/>
    <property type="match status" value="1"/>
</dbReference>
<dbReference type="FunFam" id="3.30.200.20:FF:000113">
    <property type="entry name" value="Putative tyrosine-protein kinase receptor Tie-1"/>
    <property type="match status" value="1"/>
</dbReference>
<dbReference type="FunFam" id="1.10.510.10:FF:000123">
    <property type="entry name" value="Tyrosine-protein kinase receptor Tie-1"/>
    <property type="match status" value="1"/>
</dbReference>
<dbReference type="FunFam" id="2.170.300.10:FF:000003">
    <property type="entry name" value="tyrosine-protein kinase receptor Tie-1 isoform X1"/>
    <property type="match status" value="1"/>
</dbReference>
<dbReference type="FunFam" id="2.60.40.10:FF:000591">
    <property type="entry name" value="tyrosine-protein kinase receptor Tie-1 isoform X1"/>
    <property type="match status" value="1"/>
</dbReference>
<dbReference type="FunFam" id="2.60.40.10:FF:000597">
    <property type="entry name" value="tyrosine-protein kinase receptor Tie-1 isoform X1"/>
    <property type="match status" value="1"/>
</dbReference>
<dbReference type="FunFam" id="2.60.40.10:FF:000583">
    <property type="entry name" value="tyrosine-protein kinase receptor Tie-1 isoform X2"/>
    <property type="match status" value="1"/>
</dbReference>
<dbReference type="FunFam" id="2.60.40.10:FF:000758">
    <property type="entry name" value="tyrosine-protein kinase receptor Tie-1 isoform X2"/>
    <property type="match status" value="1"/>
</dbReference>
<dbReference type="FunFam" id="2.60.40.10:FF:000911">
    <property type="entry name" value="tyrosine-protein kinase receptor Tie-1 isoform X2"/>
    <property type="match status" value="1"/>
</dbReference>
<dbReference type="Gene3D" id="2.60.40.10">
    <property type="entry name" value="Immunoglobulins"/>
    <property type="match status" value="5"/>
</dbReference>
<dbReference type="Gene3D" id="3.30.200.20">
    <property type="entry name" value="Phosphorylase Kinase, domain 1"/>
    <property type="match status" value="1"/>
</dbReference>
<dbReference type="Gene3D" id="2.170.300.10">
    <property type="entry name" value="Tie2 ligand-binding domain superfamily"/>
    <property type="match status" value="1"/>
</dbReference>
<dbReference type="Gene3D" id="1.10.510.10">
    <property type="entry name" value="Transferase(Phosphotransferase) domain 1"/>
    <property type="match status" value="1"/>
</dbReference>
<dbReference type="InterPro" id="IPR000742">
    <property type="entry name" value="EGF-like_dom"/>
</dbReference>
<dbReference type="InterPro" id="IPR003961">
    <property type="entry name" value="FN3_dom"/>
</dbReference>
<dbReference type="InterPro" id="IPR036116">
    <property type="entry name" value="FN3_sf"/>
</dbReference>
<dbReference type="InterPro" id="IPR036179">
    <property type="entry name" value="Ig-like_dom_sf"/>
</dbReference>
<dbReference type="InterPro" id="IPR013783">
    <property type="entry name" value="Ig-like_fold"/>
</dbReference>
<dbReference type="InterPro" id="IPR003599">
    <property type="entry name" value="Ig_sub"/>
</dbReference>
<dbReference type="InterPro" id="IPR013151">
    <property type="entry name" value="Immunoglobulin_dom"/>
</dbReference>
<dbReference type="InterPro" id="IPR011009">
    <property type="entry name" value="Kinase-like_dom_sf"/>
</dbReference>
<dbReference type="InterPro" id="IPR000719">
    <property type="entry name" value="Prot_kinase_dom"/>
</dbReference>
<dbReference type="InterPro" id="IPR017441">
    <property type="entry name" value="Protein_kinase_ATP_BS"/>
</dbReference>
<dbReference type="InterPro" id="IPR050122">
    <property type="entry name" value="RTK"/>
</dbReference>
<dbReference type="InterPro" id="IPR001245">
    <property type="entry name" value="Ser-Thr/Tyr_kinase_cat_dom"/>
</dbReference>
<dbReference type="InterPro" id="IPR008266">
    <property type="entry name" value="Tyr_kinase_AS"/>
</dbReference>
<dbReference type="InterPro" id="IPR020635">
    <property type="entry name" value="Tyr_kinase_cat_dom"/>
</dbReference>
<dbReference type="PANTHER" id="PTHR24416">
    <property type="entry name" value="TYROSINE-PROTEIN KINASE RECEPTOR"/>
    <property type="match status" value="1"/>
</dbReference>
<dbReference type="PANTHER" id="PTHR24416:SF341">
    <property type="entry name" value="TYROSINE-PROTEIN KINASE RECEPTOR TIE-1"/>
    <property type="match status" value="1"/>
</dbReference>
<dbReference type="Pfam" id="PF00041">
    <property type="entry name" value="fn3"/>
    <property type="match status" value="2"/>
</dbReference>
<dbReference type="Pfam" id="PF00047">
    <property type="entry name" value="ig"/>
    <property type="match status" value="2"/>
</dbReference>
<dbReference type="Pfam" id="PF07714">
    <property type="entry name" value="PK_Tyr_Ser-Thr"/>
    <property type="match status" value="1"/>
</dbReference>
<dbReference type="PRINTS" id="PR00109">
    <property type="entry name" value="TYRKINASE"/>
</dbReference>
<dbReference type="SMART" id="SM00181">
    <property type="entry name" value="EGF"/>
    <property type="match status" value="3"/>
</dbReference>
<dbReference type="SMART" id="SM00060">
    <property type="entry name" value="FN3"/>
    <property type="match status" value="3"/>
</dbReference>
<dbReference type="SMART" id="SM00409">
    <property type="entry name" value="IG"/>
    <property type="match status" value="2"/>
</dbReference>
<dbReference type="SMART" id="SM00219">
    <property type="entry name" value="TyrKc"/>
    <property type="match status" value="1"/>
</dbReference>
<dbReference type="SUPFAM" id="SSF49265">
    <property type="entry name" value="Fibronectin type III"/>
    <property type="match status" value="2"/>
</dbReference>
<dbReference type="SUPFAM" id="SSF48726">
    <property type="entry name" value="Immunoglobulin"/>
    <property type="match status" value="2"/>
</dbReference>
<dbReference type="SUPFAM" id="SSF56112">
    <property type="entry name" value="Protein kinase-like (PK-like)"/>
    <property type="match status" value="1"/>
</dbReference>
<dbReference type="PROSITE" id="PS00022">
    <property type="entry name" value="EGF_1"/>
    <property type="match status" value="3"/>
</dbReference>
<dbReference type="PROSITE" id="PS01186">
    <property type="entry name" value="EGF_2"/>
    <property type="match status" value="3"/>
</dbReference>
<dbReference type="PROSITE" id="PS50026">
    <property type="entry name" value="EGF_3"/>
    <property type="match status" value="2"/>
</dbReference>
<dbReference type="PROSITE" id="PS50853">
    <property type="entry name" value="FN3"/>
    <property type="match status" value="3"/>
</dbReference>
<dbReference type="PROSITE" id="PS00107">
    <property type="entry name" value="PROTEIN_KINASE_ATP"/>
    <property type="match status" value="1"/>
</dbReference>
<dbReference type="PROSITE" id="PS50011">
    <property type="entry name" value="PROTEIN_KINASE_DOM"/>
    <property type="match status" value="1"/>
</dbReference>
<dbReference type="PROSITE" id="PS00109">
    <property type="entry name" value="PROTEIN_KINASE_TYR"/>
    <property type="match status" value="1"/>
</dbReference>
<feature type="signal peptide">
    <location>
        <begin position="1"/>
        <end position="23"/>
    </location>
</feature>
<feature type="chain" id="PRO_0000024470" description="Tyrosine-protein kinase receptor Tie-1">
    <location>
        <begin position="24"/>
        <end position="1136"/>
    </location>
</feature>
<feature type="topological domain" description="Extracellular" evidence="3">
    <location>
        <begin position="24"/>
        <end position="757"/>
    </location>
</feature>
<feature type="transmembrane region" description="Helical" evidence="3">
    <location>
        <begin position="758"/>
        <end position="782"/>
    </location>
</feature>
<feature type="topological domain" description="Cytoplasmic" evidence="3">
    <location>
        <begin position="783"/>
        <end position="1136"/>
    </location>
</feature>
<feature type="domain" description="Ig-like C2-type 1">
    <location>
        <begin position="43"/>
        <end position="106"/>
    </location>
</feature>
<feature type="domain" description="EGF-like 1" evidence="4">
    <location>
        <begin position="212"/>
        <end position="254"/>
    </location>
</feature>
<feature type="domain" description="EGF-like 2" evidence="4">
    <location>
        <begin position="256"/>
        <end position="301"/>
    </location>
</feature>
<feature type="domain" description="EGF-like 3" evidence="4">
    <location>
        <begin position="303"/>
        <end position="343"/>
    </location>
</feature>
<feature type="domain" description="Ig-like C2-type 2">
    <location>
        <begin position="370"/>
        <end position="424"/>
    </location>
</feature>
<feature type="domain" description="Fibronectin type-III 1" evidence="6">
    <location>
        <begin position="444"/>
        <end position="543"/>
    </location>
</feature>
<feature type="domain" description="Fibronectin type-III 2" evidence="6">
    <location>
        <begin position="546"/>
        <end position="640"/>
    </location>
</feature>
<feature type="domain" description="Fibronectin type-III 3" evidence="6">
    <location>
        <begin position="644"/>
        <end position="737"/>
    </location>
</feature>
<feature type="domain" description="Protein kinase" evidence="5">
    <location>
        <begin position="837"/>
        <end position="1116"/>
    </location>
</feature>
<feature type="active site" description="Proton acceptor" evidence="5 7">
    <location>
        <position position="977"/>
    </location>
</feature>
<feature type="binding site" evidence="5">
    <location>
        <begin position="843"/>
        <end position="851"/>
    </location>
    <ligand>
        <name>ATP</name>
        <dbReference type="ChEBI" id="CHEBI:30616"/>
    </ligand>
</feature>
<feature type="binding site" evidence="5">
    <location>
        <position position="868"/>
    </location>
    <ligand>
        <name>ATP</name>
        <dbReference type="ChEBI" id="CHEBI:30616"/>
    </ligand>
</feature>
<feature type="modified residue" description="Phosphotyrosine; by autocatalysis" evidence="1">
    <location>
        <position position="1005"/>
    </location>
</feature>
<feature type="glycosylation site" description="N-linked (GlcNAc...) asparagine" evidence="3">
    <location>
        <position position="84"/>
    </location>
</feature>
<feature type="glycosylation site" description="N-linked (GlcNAc...) asparagine" evidence="3">
    <location>
        <position position="159"/>
    </location>
</feature>
<feature type="glycosylation site" description="N-linked (GlcNAc...) asparagine" evidence="3">
    <location>
        <position position="501"/>
    </location>
</feature>
<feature type="glycosylation site" description="N-linked (GlcNAc...) asparagine" evidence="3">
    <location>
        <position position="594"/>
    </location>
</feature>
<feature type="glycosylation site" description="N-linked (GlcNAc...) asparagine" evidence="3">
    <location>
        <position position="707"/>
    </location>
</feature>
<feature type="disulfide bond" evidence="4">
    <location>
        <begin position="226"/>
        <end position="235"/>
    </location>
</feature>
<feature type="disulfide bond" evidence="4">
    <location>
        <begin position="229"/>
        <end position="242"/>
    </location>
</feature>
<feature type="disulfide bond" evidence="4">
    <location>
        <begin position="244"/>
        <end position="253"/>
    </location>
</feature>
<feature type="disulfide bond" evidence="4">
    <location>
        <begin position="317"/>
        <end position="325"/>
    </location>
</feature>
<feature type="disulfide bond" evidence="4">
    <location>
        <begin position="319"/>
        <end position="331"/>
    </location>
</feature>
<feature type="disulfide bond" evidence="4">
    <location>
        <begin position="333"/>
        <end position="342"/>
    </location>
</feature>
<sequence length="1136" mass="124953">MVWLEPPLLLPIFFLASHVGAAVDLTLLADLRLTEPQRFFLTCVSGEAGAGRGSDAWGPPLLLEKDDRIVRTPRPWQPPHIARNGSSRVTVRGFSQPSDLVGVFSCVGGGGTRVLYVHNSPGAHLLPDKVTHTVNKGDTAVLSARVRKEKQTDVIWKSNGSYFYTLDRHEAQDGQFLLQLPNVQPSSSGIYSATYLEASPLGSAFFRLIVRGCEAGRWGQDCTKECPGCLHGGVCHDQDGECVCPPGFTGTRCEQACREGRFGQSCQEQCPGTSGCRGLTFCLPDPYGCSCGSGWRGSQCQEACAPGRFGADCHLQCQCQNGGTCDRFSGCVCPSGWHGMHCEKSDRIPQILDMVSELEFNLDTMPRINCAAAGNPFPVRGSMELRKPDGTVLLSTKAIVEPDRTTAEFEVPRLALGDSGLWECRVSTSGGQDSRRFRINVKVPPVPLTAPRLLAKQSRQLVVSPLVSFSGDGPIASVRLHYRPQDSTMAWSTIVVDPSENVTLMNLRPKTGYSVRVQLSRPGEGGEGAWGPPTLMTTDCPEPLLKPWLEGWHVEGPDRLRVSWSLPPVPGPLVGDGFLLRLWDGARGQERRENVSSPQARTALLTGLTPGTYYQLDVRLYHCTLLGPASPAARVLLPPSGPPAPRHLHAQALSDSEIQLMWQRPEAAAGPISKYIVEVQVAGGSGDPLWMDVDRPEETSTIVRGLNASTRYLFRVRASVQGPGDWSNVVEQSTLGNGLQIEGPVQEIHAAEEGLDQQLVLAVVGSVSATCLTILAALLTLACIRKSCLHRRRTFTYQSGSGEETILQFSSGTLTLTRRPKPQPEPLNYPVLEWEDITFEDLIGEGNFGQVIRAMIKKDGLKMNAAIKMLKEYASENDHRDFAGELEVLCKLGHHPNIINLLGACENRGYLYIAIEYAPYGNLLDFLRKSRVLETDPAFAREHGTASTLSSRQLLRFASDAANGMQYLSEKQFIHRDLAARNVLVGENLASKIADFGLSRGEEVYVKKTMGRLPVRWMAIESLNYSVYTTKSDVWSFGVLLWEIVSLGGTPYCGMTCAELYEKLPQAYRMEQPRNCDDEVYELMRQCWRDRPYERPPFAQIALQLGRMLEARKAYVNMSLFENFTYAGIDATAEEA</sequence>
<organism>
    <name type="scientific">Bos taurus</name>
    <name type="common">Bovine</name>
    <dbReference type="NCBI Taxonomy" id="9913"/>
    <lineage>
        <taxon>Eukaryota</taxon>
        <taxon>Metazoa</taxon>
        <taxon>Chordata</taxon>
        <taxon>Craniata</taxon>
        <taxon>Vertebrata</taxon>
        <taxon>Euteleostomi</taxon>
        <taxon>Mammalia</taxon>
        <taxon>Eutheria</taxon>
        <taxon>Laurasiatheria</taxon>
        <taxon>Artiodactyla</taxon>
        <taxon>Ruminantia</taxon>
        <taxon>Pecora</taxon>
        <taxon>Bovidae</taxon>
        <taxon>Bovinae</taxon>
        <taxon>Bos</taxon>
    </lineage>
</organism>
<protein>
    <recommendedName>
        <fullName>Tyrosine-protein kinase receptor Tie-1</fullName>
        <ecNumber>2.7.10.1</ecNumber>
    </recommendedName>
</protein>
<gene>
    <name type="primary">TIE1</name>
    <name type="synonym">TIE</name>
    <name type="synonym">TIE-1</name>
</gene>
<reference key="1">
    <citation type="journal article" date="1993" name="Proc. Natl. Acad. Sci. U.S.A.">
        <title>Tie-1 and tie-2 define another class of putative receptor tyrosine kinase genes expressed in early embryonic vascular system.</title>
        <authorList>
            <person name="Sato T.N."/>
            <person name="Qin Y."/>
            <person name="Kozak C.A."/>
            <person name="Andus K.L."/>
        </authorList>
    </citation>
    <scope>NUCLEOTIDE SEQUENCE [MRNA]</scope>
    <scope>TISSUE SPECIFICITY</scope>
    <source>
        <tissue>Endothelial cell</tissue>
    </source>
</reference>
<name>TIE1_BOVIN</name>
<evidence type="ECO:0000250" key="1"/>
<evidence type="ECO:0000250" key="2">
    <source>
        <dbReference type="UniProtKB" id="P35590"/>
    </source>
</evidence>
<evidence type="ECO:0000255" key="3"/>
<evidence type="ECO:0000255" key="4">
    <source>
        <dbReference type="PROSITE-ProRule" id="PRU00076"/>
    </source>
</evidence>
<evidence type="ECO:0000255" key="5">
    <source>
        <dbReference type="PROSITE-ProRule" id="PRU00159"/>
    </source>
</evidence>
<evidence type="ECO:0000255" key="6">
    <source>
        <dbReference type="PROSITE-ProRule" id="PRU00316"/>
    </source>
</evidence>
<evidence type="ECO:0000255" key="7">
    <source>
        <dbReference type="PROSITE-ProRule" id="PRU10028"/>
    </source>
</evidence>
<evidence type="ECO:0000269" key="8">
    <source>
    </source>
</evidence>
<comment type="function">
    <text evidence="1">Transmembrane tyrosine-protein kinase that may modulate TEK/TIE2 activity and contribute to the regulation of angiogenesis.</text>
</comment>
<comment type="catalytic activity">
    <reaction evidence="7">
        <text>L-tyrosyl-[protein] + ATP = O-phospho-L-tyrosyl-[protein] + ADP + H(+)</text>
        <dbReference type="Rhea" id="RHEA:10596"/>
        <dbReference type="Rhea" id="RHEA-COMP:10136"/>
        <dbReference type="Rhea" id="RHEA-COMP:20101"/>
        <dbReference type="ChEBI" id="CHEBI:15378"/>
        <dbReference type="ChEBI" id="CHEBI:30616"/>
        <dbReference type="ChEBI" id="CHEBI:46858"/>
        <dbReference type="ChEBI" id="CHEBI:61978"/>
        <dbReference type="ChEBI" id="CHEBI:456216"/>
        <dbReference type="EC" id="2.7.10.1"/>
    </reaction>
</comment>
<comment type="subunit">
    <text evidence="2">Heterodimer with TEK/TIE2 (By similarity). Interacts with SVEP1 (via C-terminus) (By similarity).</text>
</comment>
<comment type="subcellular location">
    <subcellularLocation>
        <location evidence="1">Cell membrane</location>
        <topology evidence="1">Single-pass type I membrane protein</topology>
    </subcellularLocation>
</comment>
<comment type="tissue specificity">
    <text evidence="8">Specifically expressed in developing vascular endothelial cells.</text>
</comment>
<comment type="PTM">
    <text evidence="1">Phosphorylated on tyrosine residues in response to ANGPT1, most likely by TEK/TIE2.</text>
</comment>
<comment type="similarity">
    <text evidence="5">Belongs to the protein kinase superfamily. Tyr protein kinase family. Tie subfamily.</text>
</comment>